<sequence>MNTIAPNLDGKHLRIGIVQARFTNEIGSEMLKVCCRTLQELGVADENITVATVPGALEIPIALMNFASSEKFDALIAIGVVIRGETYHFELVSNESGAGVSRVALDYNIPIANAVLTTENDAQAIERIEEKASDAAKVAVECANLVNLLLEEQFEDEE</sequence>
<protein>
    <recommendedName>
        <fullName evidence="1">6,7-dimethyl-8-ribityllumazine synthase</fullName>
        <shortName evidence="1">DMRL synthase</shortName>
        <shortName evidence="1">LS</shortName>
        <shortName evidence="1">Lumazine synthase</shortName>
        <ecNumber evidence="1">2.5.1.78</ecNumber>
    </recommendedName>
</protein>
<proteinExistence type="inferred from homology"/>
<gene>
    <name evidence="1" type="primary">ribH</name>
    <name type="synonym">ribE</name>
    <name type="ordered locus">NMB0684</name>
</gene>
<keyword id="KW-1185">Reference proteome</keyword>
<keyword id="KW-0686">Riboflavin biosynthesis</keyword>
<keyword id="KW-0808">Transferase</keyword>
<organism>
    <name type="scientific">Neisseria meningitidis serogroup B (strain ATCC BAA-335 / MC58)</name>
    <dbReference type="NCBI Taxonomy" id="122586"/>
    <lineage>
        <taxon>Bacteria</taxon>
        <taxon>Pseudomonadati</taxon>
        <taxon>Pseudomonadota</taxon>
        <taxon>Betaproteobacteria</taxon>
        <taxon>Neisseriales</taxon>
        <taxon>Neisseriaceae</taxon>
        <taxon>Neisseria</taxon>
    </lineage>
</organism>
<comment type="function">
    <text evidence="1">Catalyzes the formation of 6,7-dimethyl-8-ribityllumazine by condensation of 5-amino-6-(D-ribitylamino)uracil with 3,4-dihydroxy-2-butanone 4-phosphate. This is the penultimate step in the biosynthesis of riboflavin.</text>
</comment>
<comment type="catalytic activity">
    <reaction evidence="1">
        <text>(2S)-2-hydroxy-3-oxobutyl phosphate + 5-amino-6-(D-ribitylamino)uracil = 6,7-dimethyl-8-(1-D-ribityl)lumazine + phosphate + 2 H2O + H(+)</text>
        <dbReference type="Rhea" id="RHEA:26152"/>
        <dbReference type="ChEBI" id="CHEBI:15377"/>
        <dbReference type="ChEBI" id="CHEBI:15378"/>
        <dbReference type="ChEBI" id="CHEBI:15934"/>
        <dbReference type="ChEBI" id="CHEBI:43474"/>
        <dbReference type="ChEBI" id="CHEBI:58201"/>
        <dbReference type="ChEBI" id="CHEBI:58830"/>
        <dbReference type="EC" id="2.5.1.78"/>
    </reaction>
</comment>
<comment type="pathway">
    <text evidence="1">Cofactor biosynthesis; riboflavin biosynthesis; riboflavin from 2-hydroxy-3-oxobutyl phosphate and 5-amino-6-(D-ribitylamino)uracil: step 1/2.</text>
</comment>
<comment type="similarity">
    <text evidence="1">Belongs to the DMRL synthase family.</text>
</comment>
<name>RISB_NEIMB</name>
<dbReference type="EC" id="2.5.1.78" evidence="1"/>
<dbReference type="EMBL" id="AE002098">
    <property type="protein sequence ID" value="AAF41102.1"/>
    <property type="molecule type" value="Genomic_DNA"/>
</dbReference>
<dbReference type="PIR" id="B81172">
    <property type="entry name" value="B81172"/>
</dbReference>
<dbReference type="RefSeq" id="NP_273726.1">
    <property type="nucleotide sequence ID" value="NC_003112.2"/>
</dbReference>
<dbReference type="RefSeq" id="WP_002222781.1">
    <property type="nucleotide sequence ID" value="NC_003112.2"/>
</dbReference>
<dbReference type="SMR" id="P66037"/>
<dbReference type="FunCoup" id="P66037">
    <property type="interactions" value="514"/>
</dbReference>
<dbReference type="STRING" id="122586.NMB0684"/>
<dbReference type="PaxDb" id="122586-NMB0684"/>
<dbReference type="GeneID" id="93386490"/>
<dbReference type="KEGG" id="nme:NMB0684"/>
<dbReference type="PATRIC" id="fig|122586.8.peg.858"/>
<dbReference type="HOGENOM" id="CLU_089358_1_2_4"/>
<dbReference type="InParanoid" id="P66037"/>
<dbReference type="OrthoDB" id="9809709at2"/>
<dbReference type="UniPathway" id="UPA00275">
    <property type="reaction ID" value="UER00404"/>
</dbReference>
<dbReference type="Proteomes" id="UP000000425">
    <property type="component" value="Chromosome"/>
</dbReference>
<dbReference type="GO" id="GO:0005737">
    <property type="term" value="C:cytoplasm"/>
    <property type="evidence" value="ECO:0000318"/>
    <property type="project" value="GO_Central"/>
</dbReference>
<dbReference type="GO" id="GO:0005829">
    <property type="term" value="C:cytosol"/>
    <property type="evidence" value="ECO:0000318"/>
    <property type="project" value="GO_Central"/>
</dbReference>
<dbReference type="GO" id="GO:0009349">
    <property type="term" value="C:riboflavin synthase complex"/>
    <property type="evidence" value="ECO:0007669"/>
    <property type="project" value="InterPro"/>
</dbReference>
<dbReference type="GO" id="GO:0000906">
    <property type="term" value="F:6,7-dimethyl-8-ribityllumazine synthase activity"/>
    <property type="evidence" value="ECO:0000318"/>
    <property type="project" value="GO_Central"/>
</dbReference>
<dbReference type="GO" id="GO:0009231">
    <property type="term" value="P:riboflavin biosynthetic process"/>
    <property type="evidence" value="ECO:0000318"/>
    <property type="project" value="GO_Central"/>
</dbReference>
<dbReference type="CDD" id="cd09209">
    <property type="entry name" value="Lumazine_synthase-I"/>
    <property type="match status" value="1"/>
</dbReference>
<dbReference type="FunFam" id="3.40.50.960:FF:000006">
    <property type="entry name" value="6,7-dimethyl-8-ribityllumazine synthase"/>
    <property type="match status" value="1"/>
</dbReference>
<dbReference type="Gene3D" id="3.40.50.960">
    <property type="entry name" value="Lumazine/riboflavin synthase"/>
    <property type="match status" value="1"/>
</dbReference>
<dbReference type="HAMAP" id="MF_00178">
    <property type="entry name" value="Lumazine_synth"/>
    <property type="match status" value="1"/>
</dbReference>
<dbReference type="InterPro" id="IPR034964">
    <property type="entry name" value="LS"/>
</dbReference>
<dbReference type="InterPro" id="IPR002180">
    <property type="entry name" value="LS/RS"/>
</dbReference>
<dbReference type="InterPro" id="IPR036467">
    <property type="entry name" value="LS/RS_sf"/>
</dbReference>
<dbReference type="NCBIfam" id="TIGR00114">
    <property type="entry name" value="lumazine-synth"/>
    <property type="match status" value="1"/>
</dbReference>
<dbReference type="PANTHER" id="PTHR21058:SF0">
    <property type="entry name" value="6,7-DIMETHYL-8-RIBITYLLUMAZINE SYNTHASE"/>
    <property type="match status" value="1"/>
</dbReference>
<dbReference type="PANTHER" id="PTHR21058">
    <property type="entry name" value="6,7-DIMETHYL-8-RIBITYLLUMAZINE SYNTHASE DMRL SYNTHASE LUMAZINE SYNTHASE"/>
    <property type="match status" value="1"/>
</dbReference>
<dbReference type="Pfam" id="PF00885">
    <property type="entry name" value="DMRL_synthase"/>
    <property type="match status" value="1"/>
</dbReference>
<dbReference type="SUPFAM" id="SSF52121">
    <property type="entry name" value="Lumazine synthase"/>
    <property type="match status" value="1"/>
</dbReference>
<evidence type="ECO:0000255" key="1">
    <source>
        <dbReference type="HAMAP-Rule" id="MF_00178"/>
    </source>
</evidence>
<feature type="chain" id="PRO_0000134775" description="6,7-dimethyl-8-ribityllumazine synthase">
    <location>
        <begin position="1"/>
        <end position="158"/>
    </location>
</feature>
<feature type="active site" description="Proton donor" evidence="1">
    <location>
        <position position="88"/>
    </location>
</feature>
<feature type="binding site" evidence="1">
    <location>
        <position position="22"/>
    </location>
    <ligand>
        <name>5-amino-6-(D-ribitylamino)uracil</name>
        <dbReference type="ChEBI" id="CHEBI:15934"/>
    </ligand>
</feature>
<feature type="binding site" evidence="1">
    <location>
        <begin position="56"/>
        <end position="58"/>
    </location>
    <ligand>
        <name>5-amino-6-(D-ribitylamino)uracil</name>
        <dbReference type="ChEBI" id="CHEBI:15934"/>
    </ligand>
</feature>
<feature type="binding site" evidence="1">
    <location>
        <begin position="80"/>
        <end position="82"/>
    </location>
    <ligand>
        <name>5-amino-6-(D-ribitylamino)uracil</name>
        <dbReference type="ChEBI" id="CHEBI:15934"/>
    </ligand>
</feature>
<feature type="binding site" evidence="1">
    <location>
        <begin position="85"/>
        <end position="86"/>
    </location>
    <ligand>
        <name>(2S)-2-hydroxy-3-oxobutyl phosphate</name>
        <dbReference type="ChEBI" id="CHEBI:58830"/>
    </ligand>
</feature>
<feature type="binding site" evidence="1">
    <location>
        <position position="113"/>
    </location>
    <ligand>
        <name>5-amino-6-(D-ribitylamino)uracil</name>
        <dbReference type="ChEBI" id="CHEBI:15934"/>
    </ligand>
</feature>
<feature type="binding site" evidence="1">
    <location>
        <position position="127"/>
    </location>
    <ligand>
        <name>(2S)-2-hydroxy-3-oxobutyl phosphate</name>
        <dbReference type="ChEBI" id="CHEBI:58830"/>
    </ligand>
</feature>
<accession>P66037</accession>
<accession>Q9JQV6</accession>
<reference key="1">
    <citation type="journal article" date="2000" name="Science">
        <title>Complete genome sequence of Neisseria meningitidis serogroup B strain MC58.</title>
        <authorList>
            <person name="Tettelin H."/>
            <person name="Saunders N.J."/>
            <person name="Heidelberg J.F."/>
            <person name="Jeffries A.C."/>
            <person name="Nelson K.E."/>
            <person name="Eisen J.A."/>
            <person name="Ketchum K.A."/>
            <person name="Hood D.W."/>
            <person name="Peden J.F."/>
            <person name="Dodson R.J."/>
            <person name="Nelson W.C."/>
            <person name="Gwinn M.L."/>
            <person name="DeBoy R.T."/>
            <person name="Peterson J.D."/>
            <person name="Hickey E.K."/>
            <person name="Haft D.H."/>
            <person name="Salzberg S.L."/>
            <person name="White O."/>
            <person name="Fleischmann R.D."/>
            <person name="Dougherty B.A."/>
            <person name="Mason T.M."/>
            <person name="Ciecko A."/>
            <person name="Parksey D.S."/>
            <person name="Blair E."/>
            <person name="Cittone H."/>
            <person name="Clark E.B."/>
            <person name="Cotton M.D."/>
            <person name="Utterback T.R."/>
            <person name="Khouri H.M."/>
            <person name="Qin H."/>
            <person name="Vamathevan J.J."/>
            <person name="Gill J."/>
            <person name="Scarlato V."/>
            <person name="Masignani V."/>
            <person name="Pizza M."/>
            <person name="Grandi G."/>
            <person name="Sun L."/>
            <person name="Smith H.O."/>
            <person name="Fraser C.M."/>
            <person name="Moxon E.R."/>
            <person name="Rappuoli R."/>
            <person name="Venter J.C."/>
        </authorList>
    </citation>
    <scope>NUCLEOTIDE SEQUENCE [LARGE SCALE GENOMIC DNA]</scope>
    <source>
        <strain>ATCC BAA-335 / MC58</strain>
    </source>
</reference>